<accession>Q0BKP5</accession>
<evidence type="ECO:0000255" key="1">
    <source>
        <dbReference type="HAMAP-Rule" id="MF_01411"/>
    </source>
</evidence>
<comment type="function">
    <text evidence="1">Together with LptE, is involved in the assembly of lipopolysaccharide (LPS) at the surface of the outer membrane.</text>
</comment>
<comment type="subunit">
    <text evidence="1">Component of the lipopolysaccharide transport and assembly complex. Interacts with LptE and LptA.</text>
</comment>
<comment type="subcellular location">
    <subcellularLocation>
        <location evidence="1">Cell outer membrane</location>
    </subcellularLocation>
</comment>
<comment type="similarity">
    <text evidence="1">Belongs to the LptD family.</text>
</comment>
<reference key="1">
    <citation type="journal article" date="2006" name="J. Bacteriol.">
        <title>Chromosome rearrangement and diversification of Francisella tularensis revealed by the type B (OSU18) genome sequence.</title>
        <authorList>
            <person name="Petrosino J.F."/>
            <person name="Xiang Q."/>
            <person name="Karpathy S.E."/>
            <person name="Jiang H."/>
            <person name="Yerrapragada S."/>
            <person name="Liu Y."/>
            <person name="Gioia J."/>
            <person name="Hemphill L."/>
            <person name="Gonzalez A."/>
            <person name="Raghavan T.M."/>
            <person name="Uzman A."/>
            <person name="Fox G.E."/>
            <person name="Highlander S."/>
            <person name="Reichard M."/>
            <person name="Morton R.J."/>
            <person name="Clinkenbeard K.D."/>
            <person name="Weinstock G.M."/>
        </authorList>
    </citation>
    <scope>NUCLEOTIDE SEQUENCE [LARGE SCALE GENOMIC DNA]</scope>
    <source>
        <strain>OSU18</strain>
    </source>
</reference>
<keyword id="KW-0998">Cell outer membrane</keyword>
<keyword id="KW-0472">Membrane</keyword>
<keyword id="KW-0732">Signal</keyword>
<proteinExistence type="inferred from homology"/>
<protein>
    <recommendedName>
        <fullName evidence="1">LPS-assembly protein LptD</fullName>
    </recommendedName>
</protein>
<dbReference type="EMBL" id="CP000437">
    <property type="protein sequence ID" value="ABI83339.1"/>
    <property type="molecule type" value="Genomic_DNA"/>
</dbReference>
<dbReference type="RefSeq" id="WP_003016981.1">
    <property type="nucleotide sequence ID" value="NC_017463.1"/>
</dbReference>
<dbReference type="SMR" id="Q0BKP5"/>
<dbReference type="KEGG" id="fth:FTH_1543"/>
<dbReference type="GO" id="GO:0009279">
    <property type="term" value="C:cell outer membrane"/>
    <property type="evidence" value="ECO:0007669"/>
    <property type="project" value="UniProtKB-SubCell"/>
</dbReference>
<dbReference type="GO" id="GO:1990351">
    <property type="term" value="C:transporter complex"/>
    <property type="evidence" value="ECO:0007669"/>
    <property type="project" value="TreeGrafter"/>
</dbReference>
<dbReference type="GO" id="GO:0043165">
    <property type="term" value="P:Gram-negative-bacterium-type cell outer membrane assembly"/>
    <property type="evidence" value="ECO:0007669"/>
    <property type="project" value="UniProtKB-UniRule"/>
</dbReference>
<dbReference type="GO" id="GO:0015920">
    <property type="term" value="P:lipopolysaccharide transport"/>
    <property type="evidence" value="ECO:0007669"/>
    <property type="project" value="InterPro"/>
</dbReference>
<dbReference type="HAMAP" id="MF_01411">
    <property type="entry name" value="LPS_assembly_LptD"/>
    <property type="match status" value="1"/>
</dbReference>
<dbReference type="InterPro" id="IPR020889">
    <property type="entry name" value="LipoPS_assembly_LptD"/>
</dbReference>
<dbReference type="InterPro" id="IPR050218">
    <property type="entry name" value="LptD"/>
</dbReference>
<dbReference type="InterPro" id="IPR007543">
    <property type="entry name" value="LptD_C"/>
</dbReference>
<dbReference type="InterPro" id="IPR005653">
    <property type="entry name" value="OstA-like_N"/>
</dbReference>
<dbReference type="PANTHER" id="PTHR30189">
    <property type="entry name" value="LPS-ASSEMBLY PROTEIN"/>
    <property type="match status" value="1"/>
</dbReference>
<dbReference type="PANTHER" id="PTHR30189:SF1">
    <property type="entry name" value="LPS-ASSEMBLY PROTEIN LPTD"/>
    <property type="match status" value="1"/>
</dbReference>
<dbReference type="Pfam" id="PF04453">
    <property type="entry name" value="LptD"/>
    <property type="match status" value="1"/>
</dbReference>
<dbReference type="Pfam" id="PF03968">
    <property type="entry name" value="LptD_N"/>
    <property type="match status" value="1"/>
</dbReference>
<gene>
    <name evidence="1" type="primary">lptD</name>
    <name type="synonym">imp</name>
    <name type="synonym">ostA</name>
    <name type="ordered locus">FTH_1543</name>
</gene>
<name>LPTD_FRATO</name>
<sequence>MLKGIHKYLLMCFGTVLFTVQANAARIMSNNPIKEDWQCKVVDGEWSCKRAKKPKSVFDKKLTKTEKEKALADDLAWVKKPSYFVGGYYSNDNQFTKALCESKKTDLSYEKSEFDNYGTLIASGNVQVLQCDQELYGNNAIINLNSNNSAIRSLVMAGDVIVKQPSTGIVIRTTELDADMNNGTYSTGEAYFRLAREMPKTRIYDKEHFSGYLRGYAKTFKKESSGDIVLSDGYITSGDPYDNAWKITGNNIDIDTNTHMAYVKNGYFEIQDIPVMYIPYFSHPIDDRRRSGFLYPGFLQNANSGIGISVPYYFNLAPNYDLMLQSVIWSQRGIIENGTFRYMTKYFQGQFEGSLVPYDFKEGKMRSSFTLSTTGQYENINTNFKYEYVSDQNYYNDFSAGNVNLVTKTLLDREFDLTYTNDYVDSGLTVLDYGVVNPLLTVDNTPYAKLPEVKLNLTSDGYTPDYLTLSAQTLNTFFYKTAGPANTNPGAPQGTNVNAFRAYESPKIAFNFNKTWGYLKPSLELPIRYYKLNNKPTDIIKFKNSNVTSVLPIFNIDAGAYFDKDYTNENGTYTSTLHPRLFYTYIPYQDQTNIPLFDTSLQNEQYMQMFQVNRFTGYDRINNANQLTYAIEASTTNQDNGTTLASAKIGQMAYFADRKVNLCQGNSACPNPGLMDPFSTDTFSPIMSSFEFQVMKNIYLSAQVNYRVKQQNVDYQVYQLSYKDENENIFNVSYNNIANNWNSLTQQQIAEGAKPQPQETITLSTVLNITDHWGIAALWNYNFQQKQIANIFAGLQYNAKSWAVRALWQKTAYTNQDPNNPTLLGPLVNTYMFEFELKGLGGIGNTSDISSRLQQINGYQVGEWGNGI</sequence>
<feature type="signal peptide" evidence="1">
    <location>
        <begin position="1"/>
        <end position="24"/>
    </location>
</feature>
<feature type="chain" id="PRO_0000281605" description="LPS-assembly protein LptD">
    <location>
        <begin position="25"/>
        <end position="868"/>
    </location>
</feature>
<organism>
    <name type="scientific">Francisella tularensis subsp. holarctica (strain OSU18)</name>
    <dbReference type="NCBI Taxonomy" id="393011"/>
    <lineage>
        <taxon>Bacteria</taxon>
        <taxon>Pseudomonadati</taxon>
        <taxon>Pseudomonadota</taxon>
        <taxon>Gammaproteobacteria</taxon>
        <taxon>Thiotrichales</taxon>
        <taxon>Francisellaceae</taxon>
        <taxon>Francisella</taxon>
    </lineage>
</organism>